<name>PETN_AETCO</name>
<proteinExistence type="inferred from homology"/>
<sequence length="29" mass="3156">MDIVSLAWAGLMVVFTFSLSLVVWGRSGL</sequence>
<keyword id="KW-0150">Chloroplast</keyword>
<keyword id="KW-0249">Electron transport</keyword>
<keyword id="KW-0472">Membrane</keyword>
<keyword id="KW-0602">Photosynthesis</keyword>
<keyword id="KW-0934">Plastid</keyword>
<keyword id="KW-0793">Thylakoid</keyword>
<keyword id="KW-0812">Transmembrane</keyword>
<keyword id="KW-1133">Transmembrane helix</keyword>
<keyword id="KW-0813">Transport</keyword>
<protein>
    <recommendedName>
        <fullName evidence="1">Cytochrome b6-f complex subunit 8</fullName>
    </recommendedName>
    <alternativeName>
        <fullName evidence="1">Cytochrome b6-f complex subunit PetN</fullName>
    </alternativeName>
    <alternativeName>
        <fullName evidence="1">Cytochrome b6-f complex subunit VIII</fullName>
    </alternativeName>
</protein>
<gene>
    <name evidence="1" type="primary">petN</name>
</gene>
<reference key="1">
    <citation type="submission" date="2007-03" db="EMBL/GenBank/DDBJ databases">
        <title>Sequencing analysis of Aethionema coridifolium chloroplast DNA.</title>
        <authorList>
            <person name="Hosouchi T."/>
            <person name="Tsuruoka H."/>
            <person name="Kotani H."/>
        </authorList>
    </citation>
    <scope>NUCLEOTIDE SEQUENCE [LARGE SCALE GENOMIC DNA]</scope>
</reference>
<organism>
    <name type="scientific">Aethionema cordifolium</name>
    <name type="common">Lebanon stonecress</name>
    <dbReference type="NCBI Taxonomy" id="434059"/>
    <lineage>
        <taxon>Eukaryota</taxon>
        <taxon>Viridiplantae</taxon>
        <taxon>Streptophyta</taxon>
        <taxon>Embryophyta</taxon>
        <taxon>Tracheophyta</taxon>
        <taxon>Spermatophyta</taxon>
        <taxon>Magnoliopsida</taxon>
        <taxon>eudicotyledons</taxon>
        <taxon>Gunneridae</taxon>
        <taxon>Pentapetalae</taxon>
        <taxon>rosids</taxon>
        <taxon>malvids</taxon>
        <taxon>Brassicales</taxon>
        <taxon>Brassicaceae</taxon>
        <taxon>Aethionemeae</taxon>
        <taxon>Aethionema</taxon>
    </lineage>
</organism>
<evidence type="ECO:0000255" key="1">
    <source>
        <dbReference type="HAMAP-Rule" id="MF_00395"/>
    </source>
</evidence>
<accession>A4QJA8</accession>
<geneLocation type="chloroplast"/>
<dbReference type="EMBL" id="AP009366">
    <property type="protein sequence ID" value="BAF49763.1"/>
    <property type="molecule type" value="Genomic_DNA"/>
</dbReference>
<dbReference type="RefSeq" id="YP_001122939.1">
    <property type="nucleotide sequence ID" value="NC_009265.1"/>
</dbReference>
<dbReference type="SMR" id="A4QJA8"/>
<dbReference type="GeneID" id="4968551"/>
<dbReference type="GO" id="GO:0009535">
    <property type="term" value="C:chloroplast thylakoid membrane"/>
    <property type="evidence" value="ECO:0007669"/>
    <property type="project" value="UniProtKB-SubCell"/>
</dbReference>
<dbReference type="GO" id="GO:0009512">
    <property type="term" value="C:cytochrome b6f complex"/>
    <property type="evidence" value="ECO:0007669"/>
    <property type="project" value="InterPro"/>
</dbReference>
<dbReference type="GO" id="GO:0045158">
    <property type="term" value="F:electron transporter, transferring electrons within cytochrome b6/f complex of photosystem II activity"/>
    <property type="evidence" value="ECO:0007669"/>
    <property type="project" value="InterPro"/>
</dbReference>
<dbReference type="GO" id="GO:0017004">
    <property type="term" value="P:cytochrome complex assembly"/>
    <property type="evidence" value="ECO:0007669"/>
    <property type="project" value="UniProtKB-UniRule"/>
</dbReference>
<dbReference type="GO" id="GO:0015979">
    <property type="term" value="P:photosynthesis"/>
    <property type="evidence" value="ECO:0007669"/>
    <property type="project" value="UniProtKB-KW"/>
</dbReference>
<dbReference type="HAMAP" id="MF_00395">
    <property type="entry name" value="Cytb6_f_PetN"/>
    <property type="match status" value="1"/>
</dbReference>
<dbReference type="InterPro" id="IPR036143">
    <property type="entry name" value="Cytochr_b6-f_cplx_su8_sf"/>
</dbReference>
<dbReference type="InterPro" id="IPR005497">
    <property type="entry name" value="Cytochrome_b6-f_cplx_su8"/>
</dbReference>
<dbReference type="Pfam" id="PF03742">
    <property type="entry name" value="PetN"/>
    <property type="match status" value="1"/>
</dbReference>
<dbReference type="SUPFAM" id="SSF103451">
    <property type="entry name" value="PetN subunit of the cytochrome b6f complex"/>
    <property type="match status" value="1"/>
</dbReference>
<feature type="chain" id="PRO_0000355417" description="Cytochrome b6-f complex subunit 8">
    <location>
        <begin position="1"/>
        <end position="29"/>
    </location>
</feature>
<feature type="transmembrane region" description="Helical" evidence="1">
    <location>
        <begin position="3"/>
        <end position="23"/>
    </location>
</feature>
<comment type="function">
    <text evidence="1">Component of the cytochrome b6-f complex, which mediates electron transfer between photosystem II (PSII) and photosystem I (PSI), cyclic electron flow around PSI, and state transitions.</text>
</comment>
<comment type="subunit">
    <text evidence="1">The 4 large subunits of the cytochrome b6-f complex are cytochrome b6, subunit IV (17 kDa polypeptide, PetD), cytochrome f and the Rieske protein, while the 4 small subunits are PetG, PetL, PetM and PetN. The complex functions as a dimer.</text>
</comment>
<comment type="subcellular location">
    <subcellularLocation>
        <location evidence="1">Plastid</location>
        <location evidence="1">Chloroplast thylakoid membrane</location>
        <topology evidence="1">Single-pass membrane protein</topology>
    </subcellularLocation>
</comment>
<comment type="similarity">
    <text evidence="1">Belongs to the PetN family.</text>
</comment>